<protein>
    <recommendedName>
        <fullName evidence="1">UDP-N-acetylglucosamine 1-carboxyvinyltransferase</fullName>
        <ecNumber evidence="1">2.5.1.7</ecNumber>
    </recommendedName>
    <alternativeName>
        <fullName evidence="1">Enoylpyruvate transferase</fullName>
    </alternativeName>
    <alternativeName>
        <fullName evidence="1">UDP-N-acetylglucosamine enolpyruvyl transferase</fullName>
        <shortName evidence="1">EPT</shortName>
    </alternativeName>
</protein>
<proteinExistence type="inferred from homology"/>
<reference key="1">
    <citation type="journal article" date="2008" name="PLoS Genet.">
        <title>Complete genome sequence of the complex carbohydrate-degrading marine bacterium, Saccharophagus degradans strain 2-40 T.</title>
        <authorList>
            <person name="Weiner R.M."/>
            <person name="Taylor L.E. II"/>
            <person name="Henrissat B."/>
            <person name="Hauser L."/>
            <person name="Land M."/>
            <person name="Coutinho P.M."/>
            <person name="Rancurel C."/>
            <person name="Saunders E.H."/>
            <person name="Longmire A.G."/>
            <person name="Zhang H."/>
            <person name="Bayer E.A."/>
            <person name="Gilbert H.J."/>
            <person name="Larimer F."/>
            <person name="Zhulin I.B."/>
            <person name="Ekborg N.A."/>
            <person name="Lamed R."/>
            <person name="Richardson P.M."/>
            <person name="Borovok I."/>
            <person name="Hutcheson S."/>
        </authorList>
    </citation>
    <scope>NUCLEOTIDE SEQUENCE [LARGE SCALE GENOMIC DNA]</scope>
    <source>
        <strain>2-40 / ATCC 43961 / DSM 17024</strain>
    </source>
</reference>
<sequence>MDKLIIEGGSRINGEIRISGSKNSGLPILAATLLASGPMHICNLPHLNDITTMLALLRCMGVGVTIDEKMCVEVDPTSITEFEAPYELVRTMRASILVLGPMLARFGKADVSFPGGCAIGSRPVDIHLRGLEAMGAEIEVDGGYIRAKAPNGLKGARYLMDTVTVGGTENLLMAAVLAEGTTILENAAREPEIVDLAECLIAMGAKIKGVGTDRLEIEGVKTLNGCTYEVMPDRIETGTYLVAAAATGGWVKLRDTRADILEAVLLKLEEAGAEITVGEGTIELAMHGKRPKAVSFKTAPYPAFPTDMQAQFTAMNAIAEGTSSVVETIFENRLIQVHELNRMGANIRLEGNTAIITGVEKLKAAPVMASDLRASASLVIAGMLAEGDTLVDRIYHIDRGYECIEEKLQALGVRIRRVPG</sequence>
<name>MURA_SACD2</name>
<evidence type="ECO:0000255" key="1">
    <source>
        <dbReference type="HAMAP-Rule" id="MF_00111"/>
    </source>
</evidence>
<gene>
    <name evidence="1" type="primary">murA</name>
    <name type="ordered locus">Sde_3170</name>
</gene>
<dbReference type="EC" id="2.5.1.7" evidence="1"/>
<dbReference type="EMBL" id="CP000282">
    <property type="protein sequence ID" value="ABD82427.1"/>
    <property type="molecule type" value="Genomic_DNA"/>
</dbReference>
<dbReference type="RefSeq" id="WP_011469643.1">
    <property type="nucleotide sequence ID" value="NC_007912.1"/>
</dbReference>
<dbReference type="SMR" id="Q21FV2"/>
<dbReference type="STRING" id="203122.Sde_3170"/>
<dbReference type="GeneID" id="98614797"/>
<dbReference type="KEGG" id="sde:Sde_3170"/>
<dbReference type="eggNOG" id="COG0766">
    <property type="taxonomic scope" value="Bacteria"/>
</dbReference>
<dbReference type="HOGENOM" id="CLU_027387_0_0_6"/>
<dbReference type="OrthoDB" id="9803760at2"/>
<dbReference type="UniPathway" id="UPA00219"/>
<dbReference type="Proteomes" id="UP000001947">
    <property type="component" value="Chromosome"/>
</dbReference>
<dbReference type="GO" id="GO:0005737">
    <property type="term" value="C:cytoplasm"/>
    <property type="evidence" value="ECO:0007669"/>
    <property type="project" value="UniProtKB-SubCell"/>
</dbReference>
<dbReference type="GO" id="GO:0008760">
    <property type="term" value="F:UDP-N-acetylglucosamine 1-carboxyvinyltransferase activity"/>
    <property type="evidence" value="ECO:0007669"/>
    <property type="project" value="UniProtKB-UniRule"/>
</dbReference>
<dbReference type="GO" id="GO:0051301">
    <property type="term" value="P:cell division"/>
    <property type="evidence" value="ECO:0007669"/>
    <property type="project" value="UniProtKB-KW"/>
</dbReference>
<dbReference type="GO" id="GO:0071555">
    <property type="term" value="P:cell wall organization"/>
    <property type="evidence" value="ECO:0007669"/>
    <property type="project" value="UniProtKB-KW"/>
</dbReference>
<dbReference type="GO" id="GO:0009252">
    <property type="term" value="P:peptidoglycan biosynthetic process"/>
    <property type="evidence" value="ECO:0007669"/>
    <property type="project" value="UniProtKB-UniRule"/>
</dbReference>
<dbReference type="GO" id="GO:0008360">
    <property type="term" value="P:regulation of cell shape"/>
    <property type="evidence" value="ECO:0007669"/>
    <property type="project" value="UniProtKB-KW"/>
</dbReference>
<dbReference type="GO" id="GO:0019277">
    <property type="term" value="P:UDP-N-acetylgalactosamine biosynthetic process"/>
    <property type="evidence" value="ECO:0007669"/>
    <property type="project" value="InterPro"/>
</dbReference>
<dbReference type="CDD" id="cd01555">
    <property type="entry name" value="UdpNAET"/>
    <property type="match status" value="1"/>
</dbReference>
<dbReference type="FunFam" id="3.65.10.10:FF:000002">
    <property type="entry name" value="UDP-N-acetylglucosamine 1-carboxyvinyltransferase"/>
    <property type="match status" value="1"/>
</dbReference>
<dbReference type="Gene3D" id="3.65.10.10">
    <property type="entry name" value="Enolpyruvate transferase domain"/>
    <property type="match status" value="2"/>
</dbReference>
<dbReference type="HAMAP" id="MF_00111">
    <property type="entry name" value="MurA"/>
    <property type="match status" value="1"/>
</dbReference>
<dbReference type="InterPro" id="IPR001986">
    <property type="entry name" value="Enolpyruvate_Tfrase_dom"/>
</dbReference>
<dbReference type="InterPro" id="IPR036968">
    <property type="entry name" value="Enolpyruvate_Tfrase_sf"/>
</dbReference>
<dbReference type="InterPro" id="IPR050068">
    <property type="entry name" value="MurA_subfamily"/>
</dbReference>
<dbReference type="InterPro" id="IPR013792">
    <property type="entry name" value="RNA3'P_cycl/enolpyr_Trfase_a/b"/>
</dbReference>
<dbReference type="InterPro" id="IPR005750">
    <property type="entry name" value="UDP_GlcNAc_COvinyl_MurA"/>
</dbReference>
<dbReference type="NCBIfam" id="TIGR01072">
    <property type="entry name" value="murA"/>
    <property type="match status" value="1"/>
</dbReference>
<dbReference type="NCBIfam" id="NF006873">
    <property type="entry name" value="PRK09369.1"/>
    <property type="match status" value="1"/>
</dbReference>
<dbReference type="PANTHER" id="PTHR43783">
    <property type="entry name" value="UDP-N-ACETYLGLUCOSAMINE 1-CARBOXYVINYLTRANSFERASE"/>
    <property type="match status" value="1"/>
</dbReference>
<dbReference type="PANTHER" id="PTHR43783:SF1">
    <property type="entry name" value="UDP-N-ACETYLGLUCOSAMINE 1-CARBOXYVINYLTRANSFERASE"/>
    <property type="match status" value="1"/>
</dbReference>
<dbReference type="Pfam" id="PF00275">
    <property type="entry name" value="EPSP_synthase"/>
    <property type="match status" value="1"/>
</dbReference>
<dbReference type="SUPFAM" id="SSF55205">
    <property type="entry name" value="EPT/RTPC-like"/>
    <property type="match status" value="1"/>
</dbReference>
<accession>Q21FV2</accession>
<comment type="function">
    <text evidence="1">Cell wall formation. Adds enolpyruvyl to UDP-N-acetylglucosamine.</text>
</comment>
<comment type="catalytic activity">
    <reaction evidence="1">
        <text>phosphoenolpyruvate + UDP-N-acetyl-alpha-D-glucosamine = UDP-N-acetyl-3-O-(1-carboxyvinyl)-alpha-D-glucosamine + phosphate</text>
        <dbReference type="Rhea" id="RHEA:18681"/>
        <dbReference type="ChEBI" id="CHEBI:43474"/>
        <dbReference type="ChEBI" id="CHEBI:57705"/>
        <dbReference type="ChEBI" id="CHEBI:58702"/>
        <dbReference type="ChEBI" id="CHEBI:68483"/>
        <dbReference type="EC" id="2.5.1.7"/>
    </reaction>
</comment>
<comment type="pathway">
    <text evidence="1">Cell wall biogenesis; peptidoglycan biosynthesis.</text>
</comment>
<comment type="subcellular location">
    <subcellularLocation>
        <location evidence="1">Cytoplasm</location>
    </subcellularLocation>
</comment>
<comment type="similarity">
    <text evidence="1">Belongs to the EPSP synthase family. MurA subfamily.</text>
</comment>
<keyword id="KW-0131">Cell cycle</keyword>
<keyword id="KW-0132">Cell division</keyword>
<keyword id="KW-0133">Cell shape</keyword>
<keyword id="KW-0961">Cell wall biogenesis/degradation</keyword>
<keyword id="KW-0963">Cytoplasm</keyword>
<keyword id="KW-0573">Peptidoglycan synthesis</keyword>
<keyword id="KW-0670">Pyruvate</keyword>
<keyword id="KW-1185">Reference proteome</keyword>
<keyword id="KW-0808">Transferase</keyword>
<feature type="chain" id="PRO_1000023096" description="UDP-N-acetylglucosamine 1-carboxyvinyltransferase">
    <location>
        <begin position="1"/>
        <end position="420"/>
    </location>
</feature>
<feature type="active site" description="Proton donor" evidence="1">
    <location>
        <position position="117"/>
    </location>
</feature>
<feature type="binding site" evidence="1">
    <location>
        <begin position="22"/>
        <end position="23"/>
    </location>
    <ligand>
        <name>phosphoenolpyruvate</name>
        <dbReference type="ChEBI" id="CHEBI:58702"/>
    </ligand>
</feature>
<feature type="binding site" evidence="1">
    <location>
        <position position="93"/>
    </location>
    <ligand>
        <name>UDP-N-acetyl-alpha-D-glucosamine</name>
        <dbReference type="ChEBI" id="CHEBI:57705"/>
    </ligand>
</feature>
<feature type="binding site" evidence="1">
    <location>
        <position position="307"/>
    </location>
    <ligand>
        <name>UDP-N-acetyl-alpha-D-glucosamine</name>
        <dbReference type="ChEBI" id="CHEBI:57705"/>
    </ligand>
</feature>
<feature type="binding site" evidence="1">
    <location>
        <position position="329"/>
    </location>
    <ligand>
        <name>UDP-N-acetyl-alpha-D-glucosamine</name>
        <dbReference type="ChEBI" id="CHEBI:57705"/>
    </ligand>
</feature>
<feature type="modified residue" description="2-(S-cysteinyl)pyruvic acid O-phosphothioketal" evidence="1">
    <location>
        <position position="117"/>
    </location>
</feature>
<organism>
    <name type="scientific">Saccharophagus degradans (strain 2-40 / ATCC 43961 / DSM 17024)</name>
    <dbReference type="NCBI Taxonomy" id="203122"/>
    <lineage>
        <taxon>Bacteria</taxon>
        <taxon>Pseudomonadati</taxon>
        <taxon>Pseudomonadota</taxon>
        <taxon>Gammaproteobacteria</taxon>
        <taxon>Cellvibrionales</taxon>
        <taxon>Cellvibrionaceae</taxon>
        <taxon>Saccharophagus</taxon>
    </lineage>
</organism>